<comment type="function">
    <text evidence="1">Poorly processive, error-prone DNA polymerase involved in untargeted mutagenesis. Copies undamaged DNA at stalled replication forks, which arise in vivo from mismatched or misaligned primer ends. These misaligned primers can be extended by PolIV. Exhibits no 3'-5' exonuclease (proofreading) activity. May be involved in translesional synthesis, in conjunction with the beta clamp from PolIII.</text>
</comment>
<comment type="catalytic activity">
    <reaction evidence="1">
        <text>DNA(n) + a 2'-deoxyribonucleoside 5'-triphosphate = DNA(n+1) + diphosphate</text>
        <dbReference type="Rhea" id="RHEA:22508"/>
        <dbReference type="Rhea" id="RHEA-COMP:17339"/>
        <dbReference type="Rhea" id="RHEA-COMP:17340"/>
        <dbReference type="ChEBI" id="CHEBI:33019"/>
        <dbReference type="ChEBI" id="CHEBI:61560"/>
        <dbReference type="ChEBI" id="CHEBI:173112"/>
        <dbReference type="EC" id="2.7.7.7"/>
    </reaction>
</comment>
<comment type="cofactor">
    <cofactor evidence="1">
        <name>Mg(2+)</name>
        <dbReference type="ChEBI" id="CHEBI:18420"/>
    </cofactor>
    <text evidence="1">Binds 2 magnesium ions per subunit.</text>
</comment>
<comment type="subunit">
    <text evidence="1">Monomer.</text>
</comment>
<comment type="subcellular location">
    <subcellularLocation>
        <location evidence="1">Cytoplasm</location>
    </subcellularLocation>
</comment>
<comment type="similarity">
    <text evidence="1">Belongs to the DNA polymerase type-Y family.</text>
</comment>
<proteinExistence type="inferred from homology"/>
<protein>
    <recommendedName>
        <fullName evidence="1">DNA polymerase IV</fullName>
        <shortName evidence="1">Pol IV</shortName>
        <ecNumber evidence="1">2.7.7.7</ecNumber>
    </recommendedName>
</protein>
<name>DPO4_PSET1</name>
<gene>
    <name evidence="1" type="primary">dinB</name>
    <name type="ordered locus">PSHAa2389</name>
</gene>
<feature type="chain" id="PRO_1000084914" description="DNA polymerase IV">
    <location>
        <begin position="1"/>
        <end position="351"/>
    </location>
</feature>
<feature type="domain" description="UmuC" evidence="1">
    <location>
        <begin position="4"/>
        <end position="184"/>
    </location>
</feature>
<feature type="active site" evidence="1">
    <location>
        <position position="103"/>
    </location>
</feature>
<feature type="binding site" evidence="1">
    <location>
        <position position="8"/>
    </location>
    <ligand>
        <name>Mg(2+)</name>
        <dbReference type="ChEBI" id="CHEBI:18420"/>
    </ligand>
</feature>
<feature type="binding site" evidence="1">
    <location>
        <position position="102"/>
    </location>
    <ligand>
        <name>Mg(2+)</name>
        <dbReference type="ChEBI" id="CHEBI:18420"/>
    </ligand>
</feature>
<feature type="site" description="Substrate discrimination" evidence="1">
    <location>
        <position position="13"/>
    </location>
</feature>
<dbReference type="EC" id="2.7.7.7" evidence="1"/>
<dbReference type="EMBL" id="CR954246">
    <property type="protein sequence ID" value="CAI87438.1"/>
    <property type="molecule type" value="Genomic_DNA"/>
</dbReference>
<dbReference type="SMR" id="Q3II35"/>
<dbReference type="STRING" id="326442.PSHAa2389"/>
<dbReference type="KEGG" id="pha:PSHAa2389"/>
<dbReference type="PATRIC" id="fig|326442.8.peg.2302"/>
<dbReference type="eggNOG" id="COG0389">
    <property type="taxonomic scope" value="Bacteria"/>
</dbReference>
<dbReference type="HOGENOM" id="CLU_012348_1_2_6"/>
<dbReference type="BioCyc" id="PHAL326442:PSHA_RS11770-MONOMER"/>
<dbReference type="Proteomes" id="UP000006843">
    <property type="component" value="Chromosome I"/>
</dbReference>
<dbReference type="GO" id="GO:0005829">
    <property type="term" value="C:cytosol"/>
    <property type="evidence" value="ECO:0007669"/>
    <property type="project" value="TreeGrafter"/>
</dbReference>
<dbReference type="GO" id="GO:0003684">
    <property type="term" value="F:damaged DNA binding"/>
    <property type="evidence" value="ECO:0007669"/>
    <property type="project" value="InterPro"/>
</dbReference>
<dbReference type="GO" id="GO:0003887">
    <property type="term" value="F:DNA-directed DNA polymerase activity"/>
    <property type="evidence" value="ECO:0007669"/>
    <property type="project" value="UniProtKB-UniRule"/>
</dbReference>
<dbReference type="GO" id="GO:0000287">
    <property type="term" value="F:magnesium ion binding"/>
    <property type="evidence" value="ECO:0007669"/>
    <property type="project" value="UniProtKB-UniRule"/>
</dbReference>
<dbReference type="GO" id="GO:0006261">
    <property type="term" value="P:DNA-templated DNA replication"/>
    <property type="evidence" value="ECO:0007669"/>
    <property type="project" value="UniProtKB-UniRule"/>
</dbReference>
<dbReference type="GO" id="GO:0042276">
    <property type="term" value="P:error-prone translesion synthesis"/>
    <property type="evidence" value="ECO:0007669"/>
    <property type="project" value="TreeGrafter"/>
</dbReference>
<dbReference type="GO" id="GO:0009432">
    <property type="term" value="P:SOS response"/>
    <property type="evidence" value="ECO:0007669"/>
    <property type="project" value="TreeGrafter"/>
</dbReference>
<dbReference type="CDD" id="cd03586">
    <property type="entry name" value="PolY_Pol_IV_kappa"/>
    <property type="match status" value="1"/>
</dbReference>
<dbReference type="FunFam" id="3.40.1170.60:FF:000001">
    <property type="entry name" value="DNA polymerase IV"/>
    <property type="match status" value="1"/>
</dbReference>
<dbReference type="Gene3D" id="3.30.70.270">
    <property type="match status" value="1"/>
</dbReference>
<dbReference type="Gene3D" id="3.40.1170.60">
    <property type="match status" value="1"/>
</dbReference>
<dbReference type="Gene3D" id="1.10.150.20">
    <property type="entry name" value="5' to 3' exonuclease, C-terminal subdomain"/>
    <property type="match status" value="1"/>
</dbReference>
<dbReference type="Gene3D" id="3.30.1490.100">
    <property type="entry name" value="DNA polymerase, Y-family, little finger domain"/>
    <property type="match status" value="1"/>
</dbReference>
<dbReference type="HAMAP" id="MF_01113">
    <property type="entry name" value="DNApol_IV"/>
    <property type="match status" value="1"/>
</dbReference>
<dbReference type="InterPro" id="IPR043502">
    <property type="entry name" value="DNA/RNA_pol_sf"/>
</dbReference>
<dbReference type="InterPro" id="IPR036775">
    <property type="entry name" value="DNA_pol_Y-fam_lit_finger_sf"/>
</dbReference>
<dbReference type="InterPro" id="IPR017961">
    <property type="entry name" value="DNA_pol_Y-fam_little_finger"/>
</dbReference>
<dbReference type="InterPro" id="IPR050116">
    <property type="entry name" value="DNA_polymerase-Y"/>
</dbReference>
<dbReference type="InterPro" id="IPR022880">
    <property type="entry name" value="DNApol_IV"/>
</dbReference>
<dbReference type="InterPro" id="IPR024728">
    <property type="entry name" value="PolY_HhH_motif"/>
</dbReference>
<dbReference type="InterPro" id="IPR043128">
    <property type="entry name" value="Rev_trsase/Diguanyl_cyclase"/>
</dbReference>
<dbReference type="InterPro" id="IPR001126">
    <property type="entry name" value="UmuC"/>
</dbReference>
<dbReference type="NCBIfam" id="NF002677">
    <property type="entry name" value="PRK02406.1"/>
    <property type="match status" value="1"/>
</dbReference>
<dbReference type="PANTHER" id="PTHR11076:SF33">
    <property type="entry name" value="DNA POLYMERASE KAPPA"/>
    <property type="match status" value="1"/>
</dbReference>
<dbReference type="PANTHER" id="PTHR11076">
    <property type="entry name" value="DNA REPAIR POLYMERASE UMUC / TRANSFERASE FAMILY MEMBER"/>
    <property type="match status" value="1"/>
</dbReference>
<dbReference type="Pfam" id="PF00817">
    <property type="entry name" value="IMS"/>
    <property type="match status" value="1"/>
</dbReference>
<dbReference type="Pfam" id="PF11799">
    <property type="entry name" value="IMS_C"/>
    <property type="match status" value="1"/>
</dbReference>
<dbReference type="Pfam" id="PF11798">
    <property type="entry name" value="IMS_HHH"/>
    <property type="match status" value="1"/>
</dbReference>
<dbReference type="SUPFAM" id="SSF56672">
    <property type="entry name" value="DNA/RNA polymerases"/>
    <property type="match status" value="1"/>
</dbReference>
<dbReference type="SUPFAM" id="SSF100879">
    <property type="entry name" value="Lesion bypass DNA polymerase (Y-family), little finger domain"/>
    <property type="match status" value="1"/>
</dbReference>
<dbReference type="PROSITE" id="PS50173">
    <property type="entry name" value="UMUC"/>
    <property type="match status" value="1"/>
</dbReference>
<reference key="1">
    <citation type="journal article" date="2005" name="Genome Res.">
        <title>Coping with cold: the genome of the versatile marine Antarctica bacterium Pseudoalteromonas haloplanktis TAC125.</title>
        <authorList>
            <person name="Medigue C."/>
            <person name="Krin E."/>
            <person name="Pascal G."/>
            <person name="Barbe V."/>
            <person name="Bernsel A."/>
            <person name="Bertin P.N."/>
            <person name="Cheung F."/>
            <person name="Cruveiller S."/>
            <person name="D'Amico S."/>
            <person name="Duilio A."/>
            <person name="Fang G."/>
            <person name="Feller G."/>
            <person name="Ho C."/>
            <person name="Mangenot S."/>
            <person name="Marino G."/>
            <person name="Nilsson J."/>
            <person name="Parrilli E."/>
            <person name="Rocha E.P.C."/>
            <person name="Rouy Z."/>
            <person name="Sekowska A."/>
            <person name="Tutino M.L."/>
            <person name="Vallenet D."/>
            <person name="von Heijne G."/>
            <person name="Danchin A."/>
        </authorList>
    </citation>
    <scope>NUCLEOTIDE SEQUENCE [LARGE SCALE GENOMIC DNA]</scope>
    <source>
        <strain>TAC 125</strain>
    </source>
</reference>
<sequence>MKKFIHIDMDCFYAAVEMRDNPKLANVPLAIGGNSRRGVLSTANYIAREYGVRSAMSNYHAKQLCPDLVIVPGRMAVYKDVSTQIRAVFSRYTDLIEPLSLDEAYLDVTHSEQCKGSATLIAQQIRADIYNATGLTASAGIAPIKFIAKIASDENKPNGQFVVLPDQVDAFLAQLPLGKIPGVGKVTLEKLNLKGLYTGQDVRKKGVNWMQQHVGNFGVSLYQKCAGEHIGRVSTERVRKSLSVEHTYEYNKNSLQECLEQLPSLLEELTTRLNKQQLQNQVNKLSVKVKFANFVVTSADQAHQQLNSDIFSELLAKAYQRGLQQPVRLLGIGVGIKNQPQHNLQLSILDM</sequence>
<accession>Q3II35</accession>
<evidence type="ECO:0000255" key="1">
    <source>
        <dbReference type="HAMAP-Rule" id="MF_01113"/>
    </source>
</evidence>
<keyword id="KW-0963">Cytoplasm</keyword>
<keyword id="KW-0227">DNA damage</keyword>
<keyword id="KW-0234">DNA repair</keyword>
<keyword id="KW-0235">DNA replication</keyword>
<keyword id="KW-0238">DNA-binding</keyword>
<keyword id="KW-0239">DNA-directed DNA polymerase</keyword>
<keyword id="KW-0460">Magnesium</keyword>
<keyword id="KW-0479">Metal-binding</keyword>
<keyword id="KW-0515">Mutator protein</keyword>
<keyword id="KW-0548">Nucleotidyltransferase</keyword>
<keyword id="KW-1185">Reference proteome</keyword>
<keyword id="KW-0808">Transferase</keyword>
<organism>
    <name type="scientific">Pseudoalteromonas translucida (strain TAC 125)</name>
    <dbReference type="NCBI Taxonomy" id="326442"/>
    <lineage>
        <taxon>Bacteria</taxon>
        <taxon>Pseudomonadati</taxon>
        <taxon>Pseudomonadota</taxon>
        <taxon>Gammaproteobacteria</taxon>
        <taxon>Alteromonadales</taxon>
        <taxon>Pseudoalteromonadaceae</taxon>
        <taxon>Pseudoalteromonas</taxon>
    </lineage>
</organism>